<organism>
    <name type="scientific">Lactobacillus johnsonii (strain CNCM I-12250 / La1 / NCC 533)</name>
    <dbReference type="NCBI Taxonomy" id="257314"/>
    <lineage>
        <taxon>Bacteria</taxon>
        <taxon>Bacillati</taxon>
        <taxon>Bacillota</taxon>
        <taxon>Bacilli</taxon>
        <taxon>Lactobacillales</taxon>
        <taxon>Lactobacillaceae</taxon>
        <taxon>Lactobacillus</taxon>
    </lineage>
</organism>
<reference key="1">
    <citation type="journal article" date="2004" name="Proc. Natl. Acad. Sci. U.S.A.">
        <title>The genome sequence of the probiotic intestinal bacterium Lactobacillus johnsonii NCC 533.</title>
        <authorList>
            <person name="Pridmore R.D."/>
            <person name="Berger B."/>
            <person name="Desiere F."/>
            <person name="Vilanova D."/>
            <person name="Barretto C."/>
            <person name="Pittet A.-C."/>
            <person name="Zwahlen M.-C."/>
            <person name="Rouvet M."/>
            <person name="Altermann E."/>
            <person name="Barrangou R."/>
            <person name="Mollet B."/>
            <person name="Mercenier A."/>
            <person name="Klaenhammer T."/>
            <person name="Arigoni F."/>
            <person name="Schell M.A."/>
        </authorList>
    </citation>
    <scope>NUCLEOTIDE SEQUENCE [LARGE SCALE GENOMIC DNA]</scope>
    <source>
        <strain>CNCM I-1225 / La1 / NCC 533</strain>
    </source>
</reference>
<gene>
    <name evidence="1" type="primary">infA</name>
    <name type="ordered locus">LJ_0358</name>
</gene>
<keyword id="KW-0963">Cytoplasm</keyword>
<keyword id="KW-0396">Initiation factor</keyword>
<keyword id="KW-0648">Protein biosynthesis</keyword>
<keyword id="KW-0694">RNA-binding</keyword>
<keyword id="KW-0699">rRNA-binding</keyword>
<protein>
    <recommendedName>
        <fullName evidence="1">Translation initiation factor IF-1</fullName>
    </recommendedName>
</protein>
<accession>P61689</accession>
<proteinExistence type="inferred from homology"/>
<name>IF1_LACJO</name>
<sequence length="73" mass="8288">MAKEDVIEVEGKVVDTLPNAMFKVELENGATILAHVSGKIRMHYIRILPGDRVTVELSPYDLTKGRITYRFIK</sequence>
<evidence type="ECO:0000255" key="1">
    <source>
        <dbReference type="HAMAP-Rule" id="MF_00075"/>
    </source>
</evidence>
<feature type="chain" id="PRO_0000095803" description="Translation initiation factor IF-1">
    <location>
        <begin position="1"/>
        <end position="73"/>
    </location>
</feature>
<feature type="domain" description="S1-like" evidence="1">
    <location>
        <begin position="1"/>
        <end position="72"/>
    </location>
</feature>
<comment type="function">
    <text evidence="1">One of the essential components for the initiation of protein synthesis. Stabilizes the binding of IF-2 and IF-3 on the 30S subunit to which N-formylmethionyl-tRNA(fMet) subsequently binds. Helps modulate mRNA selection, yielding the 30S pre-initiation complex (PIC). Upon addition of the 50S ribosomal subunit IF-1, IF-2 and IF-3 are released leaving the mature 70S translation initiation complex.</text>
</comment>
<comment type="subunit">
    <text evidence="1">Component of the 30S ribosomal translation pre-initiation complex which assembles on the 30S ribosome in the order IF-2 and IF-3, IF-1 and N-formylmethionyl-tRNA(fMet); mRNA recruitment can occur at any time during PIC assembly.</text>
</comment>
<comment type="subcellular location">
    <subcellularLocation>
        <location evidence="1">Cytoplasm</location>
    </subcellularLocation>
</comment>
<comment type="similarity">
    <text evidence="1">Belongs to the IF-1 family.</text>
</comment>
<dbReference type="EMBL" id="AE017198">
    <property type="protein sequence ID" value="AAS08347.1"/>
    <property type="molecule type" value="Genomic_DNA"/>
</dbReference>
<dbReference type="RefSeq" id="WP_003647816.1">
    <property type="nucleotide sequence ID" value="NC_005362.1"/>
</dbReference>
<dbReference type="SMR" id="P61689"/>
<dbReference type="GeneID" id="83569776"/>
<dbReference type="KEGG" id="ljo:LJ_0358"/>
<dbReference type="eggNOG" id="COG0361">
    <property type="taxonomic scope" value="Bacteria"/>
</dbReference>
<dbReference type="HOGENOM" id="CLU_151267_1_0_9"/>
<dbReference type="Proteomes" id="UP000000581">
    <property type="component" value="Chromosome"/>
</dbReference>
<dbReference type="GO" id="GO:0005829">
    <property type="term" value="C:cytosol"/>
    <property type="evidence" value="ECO:0007669"/>
    <property type="project" value="TreeGrafter"/>
</dbReference>
<dbReference type="GO" id="GO:0043022">
    <property type="term" value="F:ribosome binding"/>
    <property type="evidence" value="ECO:0007669"/>
    <property type="project" value="UniProtKB-UniRule"/>
</dbReference>
<dbReference type="GO" id="GO:0019843">
    <property type="term" value="F:rRNA binding"/>
    <property type="evidence" value="ECO:0007669"/>
    <property type="project" value="UniProtKB-UniRule"/>
</dbReference>
<dbReference type="GO" id="GO:0003743">
    <property type="term" value="F:translation initiation factor activity"/>
    <property type="evidence" value="ECO:0007669"/>
    <property type="project" value="UniProtKB-UniRule"/>
</dbReference>
<dbReference type="CDD" id="cd04451">
    <property type="entry name" value="S1_IF1"/>
    <property type="match status" value="1"/>
</dbReference>
<dbReference type="FunFam" id="2.40.50.140:FF:000002">
    <property type="entry name" value="Translation initiation factor IF-1"/>
    <property type="match status" value="1"/>
</dbReference>
<dbReference type="Gene3D" id="2.40.50.140">
    <property type="entry name" value="Nucleic acid-binding proteins"/>
    <property type="match status" value="1"/>
</dbReference>
<dbReference type="HAMAP" id="MF_00075">
    <property type="entry name" value="IF_1"/>
    <property type="match status" value="1"/>
</dbReference>
<dbReference type="InterPro" id="IPR012340">
    <property type="entry name" value="NA-bd_OB-fold"/>
</dbReference>
<dbReference type="InterPro" id="IPR006196">
    <property type="entry name" value="RNA-binding_domain_S1_IF1"/>
</dbReference>
<dbReference type="InterPro" id="IPR003029">
    <property type="entry name" value="S1_domain"/>
</dbReference>
<dbReference type="InterPro" id="IPR004368">
    <property type="entry name" value="TIF_IF1"/>
</dbReference>
<dbReference type="NCBIfam" id="TIGR00008">
    <property type="entry name" value="infA"/>
    <property type="match status" value="1"/>
</dbReference>
<dbReference type="PANTHER" id="PTHR33370">
    <property type="entry name" value="TRANSLATION INITIATION FACTOR IF-1, CHLOROPLASTIC"/>
    <property type="match status" value="1"/>
</dbReference>
<dbReference type="PANTHER" id="PTHR33370:SF1">
    <property type="entry name" value="TRANSLATION INITIATION FACTOR IF-1, CHLOROPLASTIC"/>
    <property type="match status" value="1"/>
</dbReference>
<dbReference type="Pfam" id="PF01176">
    <property type="entry name" value="eIF-1a"/>
    <property type="match status" value="1"/>
</dbReference>
<dbReference type="SMART" id="SM00316">
    <property type="entry name" value="S1"/>
    <property type="match status" value="1"/>
</dbReference>
<dbReference type="SUPFAM" id="SSF50249">
    <property type="entry name" value="Nucleic acid-binding proteins"/>
    <property type="match status" value="1"/>
</dbReference>
<dbReference type="PROSITE" id="PS50832">
    <property type="entry name" value="S1_IF1_TYPE"/>
    <property type="match status" value="1"/>
</dbReference>